<reference key="1">
    <citation type="journal article" date="1994" name="J. Biochem.">
        <title>Identification and characterization of the ackA (acetate kinase A)-pta (phosphotransacetylase) operon and complementation analysis of acetate utilization by an ackA-pta deletion mutant of Escherichia coli.</title>
        <authorList>
            <person name="Kakuda H."/>
            <person name="Hosono K."/>
            <person name="Shiroishi K."/>
            <person name="Ichihara S."/>
        </authorList>
    </citation>
    <scope>NUCLEOTIDE SEQUENCE [GENOMIC DNA]</scope>
    <scope>PROTEIN SEQUENCE OF 2-12</scope>
    <source>
        <strain>K12 / KH131</strain>
    </source>
</reference>
<reference key="2">
    <citation type="journal article" date="1994" name="Biochim. Biophys. Acta">
        <title>Nucleotide sequence of the phosphotransacetylase gene of Escherichia coli strain K12.</title>
        <authorList>
            <person name="Matsuyama A."/>
            <person name="Yamamoto-Otake H."/>
            <person name="Hewitt J."/>
            <person name="McGillivray R.T.A."/>
            <person name="Nakano E."/>
        </authorList>
    </citation>
    <scope>NUCLEOTIDE SEQUENCE [GENOMIC DNA]</scope>
    <scope>PROTEIN SEQUENCE OF 2-9</scope>
    <source>
        <strain>K12 / 1100</strain>
    </source>
</reference>
<reference key="3">
    <citation type="journal article" date="1997" name="DNA Res.">
        <title>Construction of a contiguous 874-kb sequence of the Escherichia coli-K12 genome corresponding to 50.0-68.8 min on the linkage map and analysis of its sequence features.</title>
        <authorList>
            <person name="Yamamoto Y."/>
            <person name="Aiba H."/>
            <person name="Baba T."/>
            <person name="Hayashi K."/>
            <person name="Inada T."/>
            <person name="Isono K."/>
            <person name="Itoh T."/>
            <person name="Kimura S."/>
            <person name="Kitagawa M."/>
            <person name="Makino K."/>
            <person name="Miki T."/>
            <person name="Mitsuhashi N."/>
            <person name="Mizobuchi K."/>
            <person name="Mori H."/>
            <person name="Nakade S."/>
            <person name="Nakamura Y."/>
            <person name="Nashimoto H."/>
            <person name="Oshima T."/>
            <person name="Oyama S."/>
            <person name="Saito N."/>
            <person name="Sampei G."/>
            <person name="Satoh Y."/>
            <person name="Sivasundaram S."/>
            <person name="Tagami H."/>
            <person name="Takahashi H."/>
            <person name="Takeda J."/>
            <person name="Takemoto K."/>
            <person name="Uehara K."/>
            <person name="Wada C."/>
            <person name="Yamagata S."/>
            <person name="Horiuchi T."/>
        </authorList>
    </citation>
    <scope>NUCLEOTIDE SEQUENCE [LARGE SCALE GENOMIC DNA]</scope>
    <source>
        <strain>K12 / W3110 / ATCC 27325 / DSM 5911</strain>
    </source>
</reference>
<reference key="4">
    <citation type="journal article" date="1997" name="Science">
        <title>The complete genome sequence of Escherichia coli K-12.</title>
        <authorList>
            <person name="Blattner F.R."/>
            <person name="Plunkett G. III"/>
            <person name="Bloch C.A."/>
            <person name="Perna N.T."/>
            <person name="Burland V."/>
            <person name="Riley M."/>
            <person name="Collado-Vides J."/>
            <person name="Glasner J.D."/>
            <person name="Rode C.K."/>
            <person name="Mayhew G.F."/>
            <person name="Gregor J."/>
            <person name="Davis N.W."/>
            <person name="Kirkpatrick H.A."/>
            <person name="Goeden M.A."/>
            <person name="Rose D.J."/>
            <person name="Mau B."/>
            <person name="Shao Y."/>
        </authorList>
    </citation>
    <scope>NUCLEOTIDE SEQUENCE [LARGE SCALE GENOMIC DNA]</scope>
    <source>
        <strain>K12 / MG1655 / ATCC 47076</strain>
    </source>
</reference>
<reference key="5">
    <citation type="journal article" date="2006" name="Mol. Syst. Biol.">
        <title>Highly accurate genome sequences of Escherichia coli K-12 strains MG1655 and W3110.</title>
        <authorList>
            <person name="Hayashi K."/>
            <person name="Morooka N."/>
            <person name="Yamamoto Y."/>
            <person name="Fujita K."/>
            <person name="Isono K."/>
            <person name="Choi S."/>
            <person name="Ohtsubo E."/>
            <person name="Baba T."/>
            <person name="Wanner B.L."/>
            <person name="Mori H."/>
            <person name="Horiuchi T."/>
        </authorList>
    </citation>
    <scope>NUCLEOTIDE SEQUENCE [LARGE SCALE GENOMIC DNA]</scope>
    <source>
        <strain>K12 / W3110 / ATCC 27325 / DSM 5911</strain>
    </source>
</reference>
<reference key="6">
    <citation type="journal article" date="1989" name="J. Bacteriol.">
        <title>Cloning, expression, and nucleotide sequence of the Escherichia coli K-12 ackA gene.</title>
        <authorList>
            <person name="Matsuyama A."/>
            <person name="Yamamoto H."/>
            <person name="Nakano E."/>
        </authorList>
    </citation>
    <scope>NUCLEOTIDE SEQUENCE [GENOMIC DNA] OF 1-5</scope>
    <source>
        <strain>K12</strain>
    </source>
</reference>
<reference key="7">
    <citation type="journal article" date="1999" name="J. Bacteriol.">
        <title>Acetate metabolism in a pta mutant of Escherichia coli W3110: importance of maintaining acetyl coenzyme A flux for growth and survival.</title>
        <authorList>
            <person name="Chang D.E."/>
            <person name="Shin S."/>
            <person name="Rhee J.S."/>
            <person name="Pan J.G."/>
        </authorList>
    </citation>
    <scope>DISRUPTION PHENOTYPE</scope>
    <source>
        <strain>K12 / W3110 / ATCC 27325 / DSM 5911</strain>
    </source>
</reference>
<reference key="8">
    <citation type="journal article" date="2005" name="J. Bacteriol.">
        <title>A defect in the acetyl coenzyme A&lt;--&gt;acetate pathway poisons recombinational repair-deficient mutants of Escherichia coli.</title>
        <authorList>
            <person name="Shi I.Y."/>
            <person name="Stansbury J."/>
            <person name="Kuzminov A."/>
        </authorList>
    </citation>
    <scope>FUNCTION</scope>
</reference>
<reference key="9">
    <citation type="journal article" date="2005" name="Biotechnol. Prog.">
        <title>Characterization of the acetate-producing pathways in Escherichia coli.</title>
        <authorList>
            <person name="Dittrich C.R."/>
            <person name="Bennett G.N."/>
            <person name="San K.Y."/>
        </authorList>
    </citation>
    <scope>FUNCTION</scope>
    <scope>INDUCTION</scope>
    <scope>DISRUPTION PHENOTYPE</scope>
    <source>
        <strain>K12 / MG1655 / ATCC 47076</strain>
    </source>
</reference>
<reference key="10">
    <citation type="journal article" date="2009" name="Microb. Cell Fact.">
        <title>An insight into the role of phosphotransacetylase (pta) and the acetate/acetyl-CoA node in Escherichia coli.</title>
        <authorList>
            <person name="Castano-Cerezo S."/>
            <person name="Pastor J.M."/>
            <person name="Renilla S."/>
            <person name="Bernal V."/>
            <person name="Iborra J.L."/>
            <person name="Canovas M."/>
        </authorList>
    </citation>
    <scope>DISRUPTION PHENOTYPE</scope>
</reference>
<reference key="11">
    <citation type="journal article" date="2010" name="FEBS J.">
        <title>Functional dissection of Escherichia coli phosphotransacetylase structural domains and analysis of key compounds involved in activity regulation.</title>
        <authorList>
            <person name="Campos-Bermudez V.A."/>
            <person name="Bologna F.P."/>
            <person name="Andreo C.S."/>
            <person name="Drincovich M.F."/>
        </authorList>
    </citation>
    <scope>ACTIVITY REGULATION</scope>
    <scope>BIOPHYSICOCHEMICAL PROPERTIES</scope>
    <scope>SUBUNIT</scope>
    <scope>DOMAIN</scope>
    <scope>CATALYTIC ACTIVITY</scope>
</reference>
<feature type="initiator methionine" description="Removed" evidence="6 7">
    <location>
        <position position="1"/>
    </location>
</feature>
<feature type="chain" id="PRO_0000179129" description="Phosphate acetyltransferase">
    <location>
        <begin position="2"/>
        <end position="714"/>
    </location>
</feature>
<feature type="region of interest" description="Phosphate acetyltransferase">
    <location>
        <begin position="391"/>
        <end position="714"/>
    </location>
</feature>
<feature type="sequence conflict" description="In Ref. 2; BAA04663." evidence="8" ref="2">
    <original>SLGVIRAMERKGVRLSVFKPIAQPRTGGDAP</original>
    <variation>AWRDPCNGTQRRSSERFQTYRSAAYRWRCA</variation>
    <location>
        <begin position="20"/>
        <end position="50"/>
    </location>
</feature>
<feature type="sequence conflict" description="In Ref. 1; BAA04502 and 2; BAA04663." evidence="8" ref="1 2">
    <original>KL</original>
    <variation>NV</variation>
    <location>
        <begin position="208"/>
        <end position="209"/>
    </location>
</feature>
<feature type="sequence conflict" description="In Ref. 2; BAA04663." evidence="8" ref="2">
    <original>SIPHMLEHF</original>
    <variation>QHSAHAGAL</variation>
    <location>
        <begin position="263"/>
        <end position="271"/>
    </location>
</feature>
<feature type="strand" evidence="9">
    <location>
        <begin position="3"/>
        <end position="9"/>
    </location>
</feature>
<feature type="helix" evidence="9">
    <location>
        <begin position="16"/>
        <end position="29"/>
    </location>
</feature>
<feature type="strand" evidence="9">
    <location>
        <begin position="34"/>
        <end position="37"/>
    </location>
</feature>
<feature type="helix" evidence="9">
    <location>
        <begin position="72"/>
        <end position="80"/>
    </location>
</feature>
<feature type="helix" evidence="9">
    <location>
        <begin position="84"/>
        <end position="98"/>
    </location>
</feature>
<feature type="strand" evidence="9">
    <location>
        <begin position="103"/>
        <end position="108"/>
    </location>
</feature>
<feature type="helix" evidence="9">
    <location>
        <begin position="119"/>
        <end position="130"/>
    </location>
</feature>
<feature type="strand" evidence="9">
    <location>
        <begin position="133"/>
        <end position="139"/>
    </location>
</feature>
<feature type="helix" evidence="9">
    <location>
        <begin position="145"/>
        <end position="158"/>
    </location>
</feature>
<feature type="turn" evidence="9">
    <location>
        <begin position="159"/>
        <end position="163"/>
    </location>
</feature>
<feature type="strand" evidence="9">
    <location>
        <begin position="167"/>
        <end position="173"/>
    </location>
</feature>
<feature type="helix" evidence="9">
    <location>
        <begin position="189"/>
        <end position="192"/>
    </location>
</feature>
<feature type="turn" evidence="9">
    <location>
        <begin position="210"/>
        <end position="212"/>
    </location>
</feature>
<feature type="helix" evidence="10">
    <location>
        <begin position="389"/>
        <end position="403"/>
    </location>
</feature>
<feature type="strand" evidence="10">
    <location>
        <begin position="406"/>
        <end position="410"/>
    </location>
</feature>
<feature type="helix" evidence="10">
    <location>
        <begin position="415"/>
        <end position="426"/>
    </location>
</feature>
<feature type="strand" evidence="10">
    <location>
        <begin position="431"/>
        <end position="436"/>
    </location>
</feature>
<feature type="helix" evidence="10">
    <location>
        <begin position="438"/>
        <end position="446"/>
    </location>
</feature>
<feature type="turn" evidence="10">
    <location>
        <begin position="447"/>
        <end position="449"/>
    </location>
</feature>
<feature type="strand" evidence="10">
    <location>
        <begin position="456"/>
        <end position="459"/>
    </location>
</feature>
<feature type="helix" evidence="10">
    <location>
        <begin position="461"/>
        <end position="464"/>
    </location>
</feature>
<feature type="helix" evidence="10">
    <location>
        <begin position="465"/>
        <end position="468"/>
    </location>
</feature>
<feature type="helix" evidence="10">
    <location>
        <begin position="469"/>
        <end position="475"/>
    </location>
</feature>
<feature type="helix" evidence="10">
    <location>
        <begin position="477"/>
        <end position="479"/>
    </location>
</feature>
<feature type="helix" evidence="10">
    <location>
        <begin position="483"/>
        <end position="489"/>
    </location>
</feature>
<feature type="helix" evidence="10">
    <location>
        <begin position="493"/>
        <end position="502"/>
    </location>
</feature>
<feature type="strand" evidence="10">
    <location>
        <begin position="505"/>
        <end position="511"/>
    </location>
</feature>
<feature type="helix" evidence="10">
    <location>
        <begin position="517"/>
        <end position="527"/>
    </location>
</feature>
<feature type="strand" evidence="10">
    <location>
        <begin position="538"/>
        <end position="544"/>
    </location>
</feature>
<feature type="strand" evidence="10">
    <location>
        <begin position="549"/>
        <end position="557"/>
    </location>
</feature>
<feature type="helix" evidence="10">
    <location>
        <begin position="563"/>
        <end position="579"/>
    </location>
</feature>
<feature type="strand" evidence="10">
    <location>
        <begin position="585"/>
        <end position="589"/>
    </location>
</feature>
<feature type="strand" evidence="10">
    <location>
        <begin position="591"/>
        <end position="593"/>
    </location>
</feature>
<feature type="helix" evidence="10">
    <location>
        <begin position="600"/>
        <end position="615"/>
    </location>
</feature>
<feature type="strand" evidence="10">
    <location>
        <begin position="619"/>
        <end position="625"/>
    </location>
</feature>
<feature type="helix" evidence="10">
    <location>
        <begin position="627"/>
        <end position="631"/>
    </location>
</feature>
<feature type="helix" evidence="10">
    <location>
        <begin position="633"/>
        <end position="639"/>
    </location>
</feature>
<feature type="strand" evidence="10">
    <location>
        <begin position="651"/>
        <end position="653"/>
    </location>
</feature>
<feature type="helix" evidence="10">
    <location>
        <begin position="657"/>
        <end position="670"/>
    </location>
</feature>
<feature type="strand" evidence="10">
    <location>
        <begin position="674"/>
        <end position="685"/>
    </location>
</feature>
<feature type="strand" evidence="10">
    <location>
        <begin position="687"/>
        <end position="689"/>
    </location>
</feature>
<feature type="helix" evidence="10">
    <location>
        <begin position="696"/>
        <end position="712"/>
    </location>
</feature>
<comment type="function">
    <text evidence="2 3">Involved in acetate metabolism (PubMed:16080684). Catalyzes the reversible interconversion of acetyl-CoA and acetyl phosphate (PubMed:16080684). The direction of the overall reaction changes depending on growth conditions (PubMed:16080684). On minimal medium acetyl-CoA is generated. In rich medium acetyl-CoA is converted to acetate and allowing the cell to dump the excess of acetylation potential in exchange for energy in the form of ATP (PubMed:15687190). The main pathway for acetate production during exponential phase (PubMed:16080684).</text>
</comment>
<comment type="catalytic activity">
    <reaction evidence="5">
        <text>acetyl-CoA + phosphate = acetyl phosphate + CoA</text>
        <dbReference type="Rhea" id="RHEA:19521"/>
        <dbReference type="ChEBI" id="CHEBI:22191"/>
        <dbReference type="ChEBI" id="CHEBI:43474"/>
        <dbReference type="ChEBI" id="CHEBI:57287"/>
        <dbReference type="ChEBI" id="CHEBI:57288"/>
        <dbReference type="EC" id="2.3.1.8"/>
    </reaction>
    <physiologicalReaction direction="left-to-right" evidence="5">
        <dbReference type="Rhea" id="RHEA:19522"/>
    </physiologicalReaction>
    <physiologicalReaction direction="right-to-left" evidence="5">
        <dbReference type="Rhea" id="RHEA:19523"/>
    </physiologicalReaction>
</comment>
<comment type="activity regulation">
    <text evidence="5">Inhibited by NADH and ATP. Pyruvate and PEP act as activators of the acetyl phosphate forming reaction while inhibiting the formation of acetyl-CoA.</text>
</comment>
<comment type="biophysicochemical properties">
    <kinetics>
        <KM evidence="5">67.2 uM for acetyl-CoA</KM>
        <KM evidence="5">44.9 uM for acetyl phosphate</KM>
        <Vmax evidence="5">177.4 uM/h/mg enzyme for acetyl-CoA-forming reaction</Vmax>
        <Vmax evidence="5">23.1 uM/h/mg enzyme for acetyl phosphate-forming reaction</Vmax>
    </kinetics>
</comment>
<comment type="pathway">
    <text>Metabolic intermediate biosynthesis; acetyl-CoA biosynthesis; acetyl-CoA from acetate: step 2/2.</text>
</comment>
<comment type="subunit">
    <text evidence="5">Homohexamer.</text>
</comment>
<comment type="interaction">
    <interactant intactId="EBI-555015">
        <id>P0A9M8</id>
    </interactant>
    <interactant intactId="EBI-556499">
        <id>P08365</id>
        <label>chpS</label>
    </interactant>
    <organismsDiffer>false</organismsDiffer>
    <experiments>3</experiments>
</comment>
<comment type="interaction">
    <interactant intactId="EBI-555015">
        <id>P0A9M8</id>
    </interactant>
    <interactant intactId="EBI-554985">
        <id>P0A9I5</id>
        <label>napD</label>
    </interactant>
    <organismsDiffer>false</organismsDiffer>
    <experiments>3</experiments>
</comment>
<comment type="interaction">
    <interactant intactId="EBI-555015">
        <id>P0A9M8</id>
    </interactant>
    <interactant intactId="EBI-561380">
        <id>P39332</id>
        <label>yjgH</label>
    </interactant>
    <organismsDiffer>false</organismsDiffer>
    <experiments>2</experiments>
</comment>
<comment type="subcellular location">
    <subcellularLocation>
        <location evidence="8">Cytoplasm</location>
    </subcellularLocation>
</comment>
<comment type="induction">
    <text evidence="3">Expressed during exponential phase, decreases as cells enter stationary phase at pH 7.0. Expression is inhibited at pH 6.0. Part of the ackA-pta operon.</text>
</comment>
<comment type="domain">
    <text evidence="5">The N-terminal region seems to be important for proper quaternary structure. The C-terminal region contains the substrate-binding site.</text>
</comment>
<comment type="disruption phenotype">
    <text evidence="1 3 4">Severe impairment of growth in anaerobic conditions, as well as in growth on minimal medium. Increased sensitivity to environmental changes. Poor starvation survival and slower growth on glucose, fructose, tryptone broth, or pyruvate, but normal growth on glycerol or succinate.</text>
</comment>
<comment type="similarity">
    <text evidence="8">In the N-terminal section; belongs to the CobB/CobQ family.</text>
</comment>
<comment type="similarity">
    <text evidence="8">In the C-terminal section; belongs to the phosphate acetyltransferase and butyryltransferase family.</text>
</comment>
<accession>P0A9M8</accession>
<accession>P39184</accession>
<accession>P78091</accession>
<accession>P78189</accession>
<accession>P78190</accession>
<accession>Q9EUP2</accession>
<protein>
    <recommendedName>
        <fullName>Phosphate acetyltransferase</fullName>
        <ecNumber evidence="5">2.3.1.8</ecNumber>
    </recommendedName>
    <alternativeName>
        <fullName>Phosphotransacetylase</fullName>
    </alternativeName>
</protein>
<sequence length="714" mass="77172">MSRIIMLIPTGTSVGLTSVSLGVIRAMERKGVRLSVFKPIAQPRTGGDAPDQTTTIVRANSSTTTAAEPLKMSYVEGLLSSNQKDVLMEEIVANYHANTKDAEVVLVEGLVPTRKHQFAQSLNYEIAKTLNAEIVFVMSQGTDTPEQLKERIELTRNSFGGAKNTNITGVIVNKLNAPVDEQGRTRPDLSEIFDDSSKAKVNNVDPAKLQESSPLPVLGAVPWSFDLIATRAIDMARHLNATIINEGDINTRRVKSVTFCARSIPHMLEHFRAGSLLVTSADRPDVLVAACLAAMNGVEIGALLLTGGYEMDARISKLCERAFATGLPVFMVNTNTWQTSLSLQSFNLEVPVDDHERIEKVQEYVANYINADWIESLTATSERSRRLSPPAFRYQLTELARKAGKRIVLPEGDEPRTVKAAAICAERGIATCVLLGNPAEINRVAASQGVELGAGIEIVDPEVVRESYVGRLVELRKNKGMTETVAREQLEDNVVLGTLMLEQDEVDGLVSGAVHTTANTIRPPLQLIKTAPGSSLVSSVFFMLLPEQVYVYGDCAINPDPTAEQLAEIAIQSADSAAAFGIEPRVAMLSYSTGTSGAGSDVEKVREATRLAQEKRPDLMIDGPLQYDAAVMADVAKSKAPNSPVAGRATVFIFPDLNTGNTTYKAVQRSADLISIGPMLQGMRKPVNDLSRGALVDDIVYTIALTAIQSAQQQ</sequence>
<organism>
    <name type="scientific">Escherichia coli (strain K12)</name>
    <dbReference type="NCBI Taxonomy" id="83333"/>
    <lineage>
        <taxon>Bacteria</taxon>
        <taxon>Pseudomonadati</taxon>
        <taxon>Pseudomonadota</taxon>
        <taxon>Gammaproteobacteria</taxon>
        <taxon>Enterobacterales</taxon>
        <taxon>Enterobacteriaceae</taxon>
        <taxon>Escherichia</taxon>
    </lineage>
</organism>
<gene>
    <name type="primary">pta</name>
    <name type="ordered locus">b2297</name>
    <name type="ordered locus">JW2294</name>
</gene>
<keyword id="KW-0002">3D-structure</keyword>
<keyword id="KW-0012">Acyltransferase</keyword>
<keyword id="KW-0963">Cytoplasm</keyword>
<keyword id="KW-0903">Direct protein sequencing</keyword>
<keyword id="KW-1185">Reference proteome</keyword>
<keyword id="KW-0808">Transferase</keyword>
<evidence type="ECO:0000269" key="1">
    <source>
    </source>
</evidence>
<evidence type="ECO:0000269" key="2">
    <source>
    </source>
</evidence>
<evidence type="ECO:0000269" key="3">
    <source>
    </source>
</evidence>
<evidence type="ECO:0000269" key="4">
    <source>
    </source>
</evidence>
<evidence type="ECO:0000269" key="5">
    <source>
    </source>
</evidence>
<evidence type="ECO:0000269" key="6">
    <source>
    </source>
</evidence>
<evidence type="ECO:0000269" key="7">
    <source>
    </source>
</evidence>
<evidence type="ECO:0000305" key="8"/>
<evidence type="ECO:0007829" key="9">
    <source>
        <dbReference type="PDB" id="7T85"/>
    </source>
</evidence>
<evidence type="ECO:0007829" key="10">
    <source>
        <dbReference type="PDB" id="7T88"/>
    </source>
</evidence>
<proteinExistence type="evidence at protein level"/>
<name>PTA_ECOLI</name>
<dbReference type="EC" id="2.3.1.8" evidence="5"/>
<dbReference type="EMBL" id="D17576">
    <property type="protein sequence ID" value="BAA04502.1"/>
    <property type="molecule type" value="Genomic_DNA"/>
</dbReference>
<dbReference type="EMBL" id="D21123">
    <property type="protein sequence ID" value="BAA04663.1"/>
    <property type="molecule type" value="Genomic_DNA"/>
</dbReference>
<dbReference type="EMBL" id="U00096">
    <property type="protein sequence ID" value="AAC75357.1"/>
    <property type="molecule type" value="Genomic_DNA"/>
</dbReference>
<dbReference type="EMBL" id="AP009048">
    <property type="protein sequence ID" value="BAA16136.2"/>
    <property type="molecule type" value="Genomic_DNA"/>
</dbReference>
<dbReference type="PIR" id="G65001">
    <property type="entry name" value="G65001"/>
</dbReference>
<dbReference type="PIR" id="JX0357">
    <property type="entry name" value="JX0357"/>
</dbReference>
<dbReference type="PIR" id="S50130">
    <property type="entry name" value="S50130"/>
</dbReference>
<dbReference type="RefSeq" id="NP_416800.1">
    <property type="nucleotide sequence ID" value="NC_000913.3"/>
</dbReference>
<dbReference type="RefSeq" id="WP_000086722.1">
    <property type="nucleotide sequence ID" value="NZ_STEB01000008.1"/>
</dbReference>
<dbReference type="PDB" id="7T85">
    <property type="method" value="X-ray"/>
    <property type="resolution" value="2.00 A"/>
    <property type="chains" value="A=1-220"/>
</dbReference>
<dbReference type="PDB" id="7T88">
    <property type="method" value="X-ray"/>
    <property type="resolution" value="2.10 A"/>
    <property type="chains" value="A=387-714"/>
</dbReference>
<dbReference type="PDBsum" id="7T85"/>
<dbReference type="PDBsum" id="7T88"/>
<dbReference type="SMR" id="P0A9M8"/>
<dbReference type="BioGRID" id="4261500">
    <property type="interactions" value="371"/>
</dbReference>
<dbReference type="BioGRID" id="851119">
    <property type="interactions" value="1"/>
</dbReference>
<dbReference type="DIP" id="DIP-35815N"/>
<dbReference type="FunCoup" id="P0A9M8">
    <property type="interactions" value="324"/>
</dbReference>
<dbReference type="IntAct" id="P0A9M8">
    <property type="interactions" value="28"/>
</dbReference>
<dbReference type="STRING" id="511145.b2297"/>
<dbReference type="jPOST" id="P0A9M8"/>
<dbReference type="PaxDb" id="511145-b2297"/>
<dbReference type="EnsemblBacteria" id="AAC75357">
    <property type="protein sequence ID" value="AAC75357"/>
    <property type="gene ID" value="b2297"/>
</dbReference>
<dbReference type="GeneID" id="93774877"/>
<dbReference type="GeneID" id="946778"/>
<dbReference type="KEGG" id="ecj:JW2294"/>
<dbReference type="KEGG" id="eco:b2297"/>
<dbReference type="KEGG" id="ecoc:C3026_12815"/>
<dbReference type="PATRIC" id="fig|1411691.4.peg.4437"/>
<dbReference type="EchoBASE" id="EB4147"/>
<dbReference type="eggNOG" id="COG0280">
    <property type="taxonomic scope" value="Bacteria"/>
</dbReference>
<dbReference type="eggNOG" id="COG0857">
    <property type="taxonomic scope" value="Bacteria"/>
</dbReference>
<dbReference type="InParanoid" id="P0A9M8"/>
<dbReference type="OMA" id="FFMCLAD"/>
<dbReference type="OrthoDB" id="9808984at2"/>
<dbReference type="PhylomeDB" id="P0A9M8"/>
<dbReference type="BioCyc" id="EcoCyc:PHOSACETYLTRANS-MONOMER"/>
<dbReference type="BioCyc" id="MetaCyc:PHOSACETYLTRANS-MONOMER"/>
<dbReference type="BRENDA" id="2.3.1.8">
    <property type="organism ID" value="2026"/>
</dbReference>
<dbReference type="SABIO-RK" id="P0A9M8"/>
<dbReference type="UniPathway" id="UPA00340">
    <property type="reaction ID" value="UER00459"/>
</dbReference>
<dbReference type="PRO" id="PR:P0A9M8"/>
<dbReference type="Proteomes" id="UP000000625">
    <property type="component" value="Chromosome"/>
</dbReference>
<dbReference type="GO" id="GO:0005829">
    <property type="term" value="C:cytosol"/>
    <property type="evidence" value="ECO:0000314"/>
    <property type="project" value="EcoCyc"/>
</dbReference>
<dbReference type="GO" id="GO:0008959">
    <property type="term" value="F:phosphate acetyltransferase activity"/>
    <property type="evidence" value="ECO:0000314"/>
    <property type="project" value="EcoCyc"/>
</dbReference>
<dbReference type="GO" id="GO:0008270">
    <property type="term" value="F:zinc ion binding"/>
    <property type="evidence" value="ECO:0000314"/>
    <property type="project" value="EcoliWiki"/>
</dbReference>
<dbReference type="GO" id="GO:0019413">
    <property type="term" value="P:acetate biosynthetic process"/>
    <property type="evidence" value="ECO:0000315"/>
    <property type="project" value="EcoCyc"/>
</dbReference>
<dbReference type="GO" id="GO:0045733">
    <property type="term" value="P:acetate catabolic process"/>
    <property type="evidence" value="ECO:0000315"/>
    <property type="project" value="EcoCyc"/>
</dbReference>
<dbReference type="GO" id="GO:0006083">
    <property type="term" value="P:acetate metabolic process"/>
    <property type="evidence" value="ECO:0000315"/>
    <property type="project" value="CACAO"/>
</dbReference>
<dbReference type="GO" id="GO:0019427">
    <property type="term" value="P:acetyl-CoA biosynthetic process from acetate"/>
    <property type="evidence" value="ECO:0000315"/>
    <property type="project" value="EcoCyc"/>
</dbReference>
<dbReference type="GO" id="GO:0070689">
    <property type="term" value="P:L-threonine catabolic process to propionate"/>
    <property type="evidence" value="ECO:0000315"/>
    <property type="project" value="EcoCyc"/>
</dbReference>
<dbReference type="CDD" id="cd03109">
    <property type="entry name" value="DTBS"/>
    <property type="match status" value="1"/>
</dbReference>
<dbReference type="FunFam" id="3.40.1390.20:FF:000001">
    <property type="entry name" value="Phosphate acetyltransferase"/>
    <property type="match status" value="1"/>
</dbReference>
<dbReference type="FunFam" id="3.40.50.10750:FF:000001">
    <property type="entry name" value="Phosphate acetyltransferase"/>
    <property type="match status" value="1"/>
</dbReference>
<dbReference type="FunFam" id="3.40.50.10950:FF:000001">
    <property type="entry name" value="Phosphate acetyltransferase"/>
    <property type="match status" value="1"/>
</dbReference>
<dbReference type="FunFam" id="3.40.50.300:FF:000445">
    <property type="entry name" value="Phosphate acetyltransferase"/>
    <property type="match status" value="1"/>
</dbReference>
<dbReference type="Gene3D" id="3.40.50.10950">
    <property type="match status" value="1"/>
</dbReference>
<dbReference type="Gene3D" id="3.40.1390.20">
    <property type="entry name" value="HprK N-terminal domain-like"/>
    <property type="match status" value="1"/>
</dbReference>
<dbReference type="Gene3D" id="3.40.50.10750">
    <property type="entry name" value="Isocitrate/Isopropylmalate dehydrogenase-like"/>
    <property type="match status" value="1"/>
</dbReference>
<dbReference type="Gene3D" id="3.40.50.300">
    <property type="entry name" value="P-loop containing nucleotide triphosphate hydrolases"/>
    <property type="match status" value="1"/>
</dbReference>
<dbReference type="InterPro" id="IPR010766">
    <property type="entry name" value="DRTGG"/>
</dbReference>
<dbReference type="InterPro" id="IPR016475">
    <property type="entry name" value="P-Actrans_bac"/>
</dbReference>
<dbReference type="InterPro" id="IPR027417">
    <property type="entry name" value="P-loop_NTPase"/>
</dbReference>
<dbReference type="InterPro" id="IPR004614">
    <property type="entry name" value="P_AcTrfase"/>
</dbReference>
<dbReference type="InterPro" id="IPR042113">
    <property type="entry name" value="P_AcTrfase_dom1"/>
</dbReference>
<dbReference type="InterPro" id="IPR042112">
    <property type="entry name" value="P_AcTrfase_dom2"/>
</dbReference>
<dbReference type="InterPro" id="IPR050500">
    <property type="entry name" value="Phos_Acetyltrans/Butyryltrans"/>
</dbReference>
<dbReference type="InterPro" id="IPR002505">
    <property type="entry name" value="PTA_PTB"/>
</dbReference>
<dbReference type="InterPro" id="IPR028979">
    <property type="entry name" value="Ser_kin/Pase_Hpr-like_N_sf"/>
</dbReference>
<dbReference type="NCBIfam" id="NF004167">
    <property type="entry name" value="PRK05632.1"/>
    <property type="match status" value="1"/>
</dbReference>
<dbReference type="NCBIfam" id="NF007233">
    <property type="entry name" value="PRK09653.1"/>
    <property type="match status" value="1"/>
</dbReference>
<dbReference type="NCBIfam" id="TIGR00651">
    <property type="entry name" value="pta"/>
    <property type="match status" value="1"/>
</dbReference>
<dbReference type="PANTHER" id="PTHR43356">
    <property type="entry name" value="PHOSPHATE ACETYLTRANSFERASE"/>
    <property type="match status" value="1"/>
</dbReference>
<dbReference type="PANTHER" id="PTHR43356:SF3">
    <property type="entry name" value="PHOSPHATE ACETYLTRANSFERASE"/>
    <property type="match status" value="1"/>
</dbReference>
<dbReference type="Pfam" id="PF13500">
    <property type="entry name" value="AAA_26"/>
    <property type="match status" value="1"/>
</dbReference>
<dbReference type="Pfam" id="PF07085">
    <property type="entry name" value="DRTGG"/>
    <property type="match status" value="1"/>
</dbReference>
<dbReference type="Pfam" id="PF01515">
    <property type="entry name" value="PTA_PTB"/>
    <property type="match status" value="1"/>
</dbReference>
<dbReference type="PIRSF" id="PIRSF006107">
    <property type="entry name" value="PhpActrans_proteobac"/>
    <property type="match status" value="1"/>
</dbReference>
<dbReference type="SUPFAM" id="SSF75138">
    <property type="entry name" value="HprK N-terminal domain-like"/>
    <property type="match status" value="1"/>
</dbReference>
<dbReference type="SUPFAM" id="SSF53659">
    <property type="entry name" value="Isocitrate/Isopropylmalate dehydrogenase-like"/>
    <property type="match status" value="1"/>
</dbReference>
<dbReference type="SUPFAM" id="SSF52540">
    <property type="entry name" value="P-loop containing nucleoside triphosphate hydrolases"/>
    <property type="match status" value="1"/>
</dbReference>